<evidence type="ECO:0000250" key="1"/>
<evidence type="ECO:0000255" key="2">
    <source>
        <dbReference type="PROSITE-ProRule" id="PRU00681"/>
    </source>
</evidence>
<evidence type="ECO:0000305" key="3"/>
<keyword id="KW-0963">Cytoplasm</keyword>
<keyword id="KW-0598">Phosphotransferase system</keyword>
<keyword id="KW-0762">Sugar transport</keyword>
<keyword id="KW-0813">Transport</keyword>
<name>PTHP_CHLPN</name>
<feature type="chain" id="PRO_0000107848" description="Phosphocarrier protein HPr">
    <location>
        <begin position="1"/>
        <end position="108"/>
    </location>
</feature>
<feature type="domain" description="HPr" evidence="2">
    <location>
        <begin position="21"/>
        <end position="108"/>
    </location>
</feature>
<feature type="active site" description="Pros-phosphohistidine intermediate" evidence="2">
    <location>
        <position position="35"/>
    </location>
</feature>
<gene>
    <name type="primary">ptsH</name>
    <name type="ordered locus">CPn_0037</name>
    <name type="ordered locus">CP_0738</name>
    <name type="ordered locus">CpB0041</name>
</gene>
<proteinExistence type="inferred from homology"/>
<protein>
    <recommendedName>
        <fullName>Phosphocarrier protein HPr</fullName>
    </recommendedName>
    <alternativeName>
        <fullName>Histidine-containing protein</fullName>
    </alternativeName>
</protein>
<comment type="function">
    <text evidence="1">General (non sugar-specific) component of the phosphoenolpyruvate-dependent sugar phosphotransferase system (sugar PTS). This major carbohydrate active-transport system catalyzes the phosphorylation of incoming sugar substrates concomitantly with their translocation across the cell membrane. The phosphoryl group from phosphoenolpyruvate (PEP) is transferred to the phosphoryl carrier protein HPr by enzyme I. Phospho-HPr then transfers it to the PTS EIIA domain.</text>
</comment>
<comment type="subcellular location">
    <subcellularLocation>
        <location evidence="1">Cytoplasm</location>
    </subcellularLocation>
</comment>
<comment type="similarity">
    <text evidence="3">Belongs to the HPr family.</text>
</comment>
<dbReference type="EMBL" id="AE001363">
    <property type="protein sequence ID" value="AAD18190.1"/>
    <property type="molecule type" value="Genomic_DNA"/>
</dbReference>
<dbReference type="EMBL" id="AE002161">
    <property type="protein sequence ID" value="AAF38543.1"/>
    <property type="molecule type" value="Genomic_DNA"/>
</dbReference>
<dbReference type="EMBL" id="BA000008">
    <property type="protein sequence ID" value="BAA98249.1"/>
    <property type="molecule type" value="Genomic_DNA"/>
</dbReference>
<dbReference type="EMBL" id="AE009440">
    <property type="protein sequence ID" value="AAP97974.1"/>
    <property type="molecule type" value="Genomic_DNA"/>
</dbReference>
<dbReference type="PIR" id="G86495">
    <property type="entry name" value="G86495"/>
</dbReference>
<dbReference type="PIR" id="H72126">
    <property type="entry name" value="H72126"/>
</dbReference>
<dbReference type="RefSeq" id="NP_224245.1">
    <property type="nucleotide sequence ID" value="NC_000922.1"/>
</dbReference>
<dbReference type="RefSeq" id="WP_010882687.1">
    <property type="nucleotide sequence ID" value="NZ_LN847257.1"/>
</dbReference>
<dbReference type="SMR" id="Q9Z9E4"/>
<dbReference type="STRING" id="406984.CPK_ORF00540"/>
<dbReference type="GeneID" id="45050084"/>
<dbReference type="KEGG" id="cpa:CP_0738"/>
<dbReference type="KEGG" id="cpj:ptsH"/>
<dbReference type="KEGG" id="cpn:CPn_0037"/>
<dbReference type="KEGG" id="cpt:CpB0041"/>
<dbReference type="PATRIC" id="fig|115713.3.peg.44"/>
<dbReference type="eggNOG" id="COG1925">
    <property type="taxonomic scope" value="Bacteria"/>
</dbReference>
<dbReference type="HOGENOM" id="CLU_136230_1_2_0"/>
<dbReference type="OMA" id="EFYIEMQ"/>
<dbReference type="OrthoDB" id="9809047at2"/>
<dbReference type="Proteomes" id="UP000000583">
    <property type="component" value="Chromosome"/>
</dbReference>
<dbReference type="Proteomes" id="UP000000801">
    <property type="component" value="Chromosome"/>
</dbReference>
<dbReference type="GO" id="GO:0005737">
    <property type="term" value="C:cytoplasm"/>
    <property type="evidence" value="ECO:0007669"/>
    <property type="project" value="UniProtKB-SubCell"/>
</dbReference>
<dbReference type="GO" id="GO:0009401">
    <property type="term" value="P:phosphoenolpyruvate-dependent sugar phosphotransferase system"/>
    <property type="evidence" value="ECO:0007669"/>
    <property type="project" value="UniProtKB-KW"/>
</dbReference>
<dbReference type="CDD" id="cd00367">
    <property type="entry name" value="PTS-HPr_like"/>
    <property type="match status" value="1"/>
</dbReference>
<dbReference type="Gene3D" id="3.30.1340.10">
    <property type="entry name" value="HPr-like"/>
    <property type="match status" value="1"/>
</dbReference>
<dbReference type="InterPro" id="IPR050399">
    <property type="entry name" value="HPr"/>
</dbReference>
<dbReference type="InterPro" id="IPR000032">
    <property type="entry name" value="HPr-like"/>
</dbReference>
<dbReference type="InterPro" id="IPR035895">
    <property type="entry name" value="HPr-like_sf"/>
</dbReference>
<dbReference type="InterPro" id="IPR002114">
    <property type="entry name" value="PTS_HPr_Ser_P_site"/>
</dbReference>
<dbReference type="NCBIfam" id="TIGR01003">
    <property type="entry name" value="PTS_HPr_family"/>
    <property type="match status" value="1"/>
</dbReference>
<dbReference type="PANTHER" id="PTHR33705">
    <property type="entry name" value="PHOSPHOCARRIER PROTEIN HPR"/>
    <property type="match status" value="1"/>
</dbReference>
<dbReference type="PANTHER" id="PTHR33705:SF2">
    <property type="entry name" value="PHOSPHOCARRIER PROTEIN NPR"/>
    <property type="match status" value="1"/>
</dbReference>
<dbReference type="Pfam" id="PF00381">
    <property type="entry name" value="PTS-HPr"/>
    <property type="match status" value="1"/>
</dbReference>
<dbReference type="PRINTS" id="PR00107">
    <property type="entry name" value="PHOSPHOCPHPR"/>
</dbReference>
<dbReference type="SUPFAM" id="SSF55594">
    <property type="entry name" value="HPr-like"/>
    <property type="match status" value="1"/>
</dbReference>
<dbReference type="PROSITE" id="PS51350">
    <property type="entry name" value="PTS_HPR_DOM"/>
    <property type="match status" value="1"/>
</dbReference>
<dbReference type="PROSITE" id="PS00589">
    <property type="entry name" value="PTS_HPR_SER"/>
    <property type="match status" value="1"/>
</dbReference>
<sequence>MNEPTRTYLESEKDTQDQIEELQATCIVKNAAGIHVRPAGVIVRLFDGEPCDVHFTYAGKTINAKSIMSILMLGAPQGGEILVTIRSKEAHRILQKIQDAFSSGFGEL</sequence>
<reference key="1">
    <citation type="journal article" date="1999" name="Nat. Genet.">
        <title>Comparative genomes of Chlamydia pneumoniae and C. trachomatis.</title>
        <authorList>
            <person name="Kalman S."/>
            <person name="Mitchell W.P."/>
            <person name="Marathe R."/>
            <person name="Lammel C.J."/>
            <person name="Fan J."/>
            <person name="Hyman R.W."/>
            <person name="Olinger L."/>
            <person name="Grimwood J."/>
            <person name="Davis R.W."/>
            <person name="Stephens R.S."/>
        </authorList>
    </citation>
    <scope>NUCLEOTIDE SEQUENCE [LARGE SCALE GENOMIC DNA]</scope>
    <source>
        <strain>CWL029</strain>
    </source>
</reference>
<reference key="2">
    <citation type="journal article" date="2000" name="Nucleic Acids Res.">
        <title>Genome sequences of Chlamydia trachomatis MoPn and Chlamydia pneumoniae AR39.</title>
        <authorList>
            <person name="Read T.D."/>
            <person name="Brunham R.C."/>
            <person name="Shen C."/>
            <person name="Gill S.R."/>
            <person name="Heidelberg J.F."/>
            <person name="White O."/>
            <person name="Hickey E.K."/>
            <person name="Peterson J.D."/>
            <person name="Utterback T.R."/>
            <person name="Berry K.J."/>
            <person name="Bass S."/>
            <person name="Linher K.D."/>
            <person name="Weidman J.F."/>
            <person name="Khouri H.M."/>
            <person name="Craven B."/>
            <person name="Bowman C."/>
            <person name="Dodson R.J."/>
            <person name="Gwinn M.L."/>
            <person name="Nelson W.C."/>
            <person name="DeBoy R.T."/>
            <person name="Kolonay J.F."/>
            <person name="McClarty G."/>
            <person name="Salzberg S.L."/>
            <person name="Eisen J.A."/>
            <person name="Fraser C.M."/>
        </authorList>
    </citation>
    <scope>NUCLEOTIDE SEQUENCE [LARGE SCALE GENOMIC DNA]</scope>
    <source>
        <strain>AR39</strain>
    </source>
</reference>
<reference key="3">
    <citation type="journal article" date="2000" name="Nucleic Acids Res.">
        <title>Comparison of whole genome sequences of Chlamydia pneumoniae J138 from Japan and CWL029 from USA.</title>
        <authorList>
            <person name="Shirai M."/>
            <person name="Hirakawa H."/>
            <person name="Kimoto M."/>
            <person name="Tabuchi M."/>
            <person name="Kishi F."/>
            <person name="Ouchi K."/>
            <person name="Shiba T."/>
            <person name="Ishii K."/>
            <person name="Hattori M."/>
            <person name="Kuhara S."/>
            <person name="Nakazawa T."/>
        </authorList>
    </citation>
    <scope>NUCLEOTIDE SEQUENCE [LARGE SCALE GENOMIC DNA]</scope>
    <source>
        <strain>J138</strain>
    </source>
</reference>
<reference key="4">
    <citation type="submission" date="2002-05" db="EMBL/GenBank/DDBJ databases">
        <title>The genome sequence of Chlamydia pneumoniae TW183 and comparison with other Chlamydia strains based on whole genome sequence analysis.</title>
        <authorList>
            <person name="Geng M.M."/>
            <person name="Schuhmacher A."/>
            <person name="Muehldorfer I."/>
            <person name="Bensch K.W."/>
            <person name="Schaefer K.P."/>
            <person name="Schneider S."/>
            <person name="Pohl T."/>
            <person name="Essig A."/>
            <person name="Marre R."/>
            <person name="Melchers K."/>
        </authorList>
    </citation>
    <scope>NUCLEOTIDE SEQUENCE [LARGE SCALE GENOMIC DNA]</scope>
    <source>
        <strain>TW-183</strain>
    </source>
</reference>
<accession>Q9Z9E4</accession>
<organism>
    <name type="scientific">Chlamydia pneumoniae</name>
    <name type="common">Chlamydophila pneumoniae</name>
    <dbReference type="NCBI Taxonomy" id="83558"/>
    <lineage>
        <taxon>Bacteria</taxon>
        <taxon>Pseudomonadati</taxon>
        <taxon>Chlamydiota</taxon>
        <taxon>Chlamydiia</taxon>
        <taxon>Chlamydiales</taxon>
        <taxon>Chlamydiaceae</taxon>
        <taxon>Chlamydia/Chlamydophila group</taxon>
        <taxon>Chlamydia</taxon>
    </lineage>
</organism>